<name>TRI23_CAEEL</name>
<protein>
    <recommendedName>
        <fullName>E3 ubiquitin-protein ligase arc-1</fullName>
        <ecNumber>2.3.2.27</ecNumber>
    </recommendedName>
    <alternativeName>
        <fullName>Putative GTP-binding protein trim-23 homolog</fullName>
    </alternativeName>
    <alternativeName>
        <fullName evidence="5">RING-type E3 ubiquitin transferase arc-1</fullName>
    </alternativeName>
</protein>
<comment type="function">
    <text evidence="2">Acts as an E3 ubiquitin-protein ligase.</text>
</comment>
<comment type="catalytic activity">
    <reaction>
        <text>S-ubiquitinyl-[E2 ubiquitin-conjugating enzyme]-L-cysteine + [acceptor protein]-L-lysine = [E2 ubiquitin-conjugating enzyme]-L-cysteine + N(6)-ubiquitinyl-[acceptor protein]-L-lysine.</text>
        <dbReference type="EC" id="2.3.2.27"/>
    </reaction>
</comment>
<comment type="pathway">
    <text>Protein modification; protein ubiquitination.</text>
</comment>
<comment type="similarity">
    <text evidence="5">In the C-terminal section; belongs to the small GTPase superfamily. Arf family.</text>
</comment>
<gene>
    <name type="primary">arc-1</name>
    <name type="synonym">arl-4</name>
    <name type="ORF">ZK1320.6</name>
</gene>
<organism>
    <name type="scientific">Caenorhabditis elegans</name>
    <dbReference type="NCBI Taxonomy" id="6239"/>
    <lineage>
        <taxon>Eukaryota</taxon>
        <taxon>Metazoa</taxon>
        <taxon>Ecdysozoa</taxon>
        <taxon>Nematoda</taxon>
        <taxon>Chromadorea</taxon>
        <taxon>Rhabditida</taxon>
        <taxon>Rhabditina</taxon>
        <taxon>Rhabditomorpha</taxon>
        <taxon>Rhabditoidea</taxon>
        <taxon>Rhabditidae</taxon>
        <taxon>Peloderinae</taxon>
        <taxon>Caenorhabditis</taxon>
    </lineage>
</organism>
<accession>Q09654</accession>
<evidence type="ECO:0000250" key="1"/>
<evidence type="ECO:0000250" key="2">
    <source>
        <dbReference type="UniProtKB" id="P36406"/>
    </source>
</evidence>
<evidence type="ECO:0000255" key="3">
    <source>
        <dbReference type="PROSITE-ProRule" id="PRU00024"/>
    </source>
</evidence>
<evidence type="ECO:0000255" key="4">
    <source>
        <dbReference type="PROSITE-ProRule" id="PRU00175"/>
    </source>
</evidence>
<evidence type="ECO:0000305" key="5"/>
<feature type="chain" id="PRO_0000207486" description="E3 ubiquitin-protein ligase arc-1">
    <location>
        <begin position="1"/>
        <end position="539"/>
    </location>
</feature>
<feature type="zinc finger region" description="RING-type" evidence="4">
    <location>
        <begin position="6"/>
        <end position="53"/>
    </location>
</feature>
<feature type="zinc finger region" description="B box-type" evidence="3">
    <location>
        <begin position="103"/>
        <end position="149"/>
    </location>
</feature>
<feature type="region of interest" description="ARF-like">
    <location>
        <begin position="369"/>
        <end position="539"/>
    </location>
</feature>
<feature type="binding site" evidence="1">
    <location>
        <begin position="376"/>
        <end position="383"/>
    </location>
    <ligand>
        <name>GTP</name>
        <dbReference type="ChEBI" id="CHEBI:37565"/>
    </ligand>
</feature>
<feature type="binding site" evidence="1">
    <location>
        <begin position="422"/>
        <end position="426"/>
    </location>
    <ligand>
        <name>GTP</name>
        <dbReference type="ChEBI" id="CHEBI:37565"/>
    </ligand>
</feature>
<feature type="binding site" evidence="1">
    <location>
        <begin position="481"/>
        <end position="484"/>
    </location>
    <ligand>
        <name>GTP</name>
        <dbReference type="ChEBI" id="CHEBI:37565"/>
    </ligand>
</feature>
<proteinExistence type="inferred from homology"/>
<reference key="1">
    <citation type="journal article" date="1998" name="Science">
        <title>Genome sequence of the nematode C. elegans: a platform for investigating biology.</title>
        <authorList>
            <consortium name="The C. elegans sequencing consortium"/>
        </authorList>
    </citation>
    <scope>NUCLEOTIDE SEQUENCE [LARGE SCALE GENOMIC DNA]</scope>
    <source>
        <strain>Bristol N2</strain>
    </source>
</reference>
<dbReference type="EC" id="2.3.2.27"/>
<dbReference type="EMBL" id="Z46934">
    <property type="protein sequence ID" value="CAA87044.3"/>
    <property type="molecule type" value="Genomic_DNA"/>
</dbReference>
<dbReference type="PIR" id="T27752">
    <property type="entry name" value="T27752"/>
</dbReference>
<dbReference type="RefSeq" id="NP_496089.3">
    <property type="nucleotide sequence ID" value="NM_063688.5"/>
</dbReference>
<dbReference type="SMR" id="Q09654"/>
<dbReference type="BioGRID" id="39848">
    <property type="interactions" value="1"/>
</dbReference>
<dbReference type="FunCoup" id="Q09654">
    <property type="interactions" value="761"/>
</dbReference>
<dbReference type="IntAct" id="Q09654">
    <property type="interactions" value="1"/>
</dbReference>
<dbReference type="MINT" id="Q09654"/>
<dbReference type="STRING" id="6239.ZK1320.6.1"/>
<dbReference type="PaxDb" id="6239-ZK1320.6"/>
<dbReference type="EnsemblMetazoa" id="ZK1320.6.1">
    <property type="protein sequence ID" value="ZK1320.6.1"/>
    <property type="gene ID" value="WBGene00000180"/>
</dbReference>
<dbReference type="GeneID" id="174525"/>
<dbReference type="KEGG" id="cel:CELE_ZK1320.6"/>
<dbReference type="UCSC" id="ZK1320.6">
    <property type="organism name" value="c. elegans"/>
</dbReference>
<dbReference type="AGR" id="WB:WBGene00000180"/>
<dbReference type="CTD" id="174525"/>
<dbReference type="WormBase" id="ZK1320.6">
    <property type="protein sequence ID" value="CE37598"/>
    <property type="gene ID" value="WBGene00000180"/>
    <property type="gene designation" value="arc-1"/>
</dbReference>
<dbReference type="eggNOG" id="KOG0070">
    <property type="taxonomic scope" value="Eukaryota"/>
</dbReference>
<dbReference type="eggNOG" id="KOG4185">
    <property type="taxonomic scope" value="Eukaryota"/>
</dbReference>
<dbReference type="GeneTree" id="ENSGT00940000158562"/>
<dbReference type="HOGENOM" id="CLU_033905_0_0_1"/>
<dbReference type="InParanoid" id="Q09654"/>
<dbReference type="OMA" id="MEPCFRH"/>
<dbReference type="OrthoDB" id="2011769at2759"/>
<dbReference type="PhylomeDB" id="Q09654"/>
<dbReference type="Reactome" id="R-CEL-1660514">
    <property type="pathway name" value="Synthesis of PIPs at the Golgi membrane"/>
</dbReference>
<dbReference type="Reactome" id="R-CEL-199992">
    <property type="pathway name" value="trans-Golgi Network Vesicle Budding"/>
</dbReference>
<dbReference type="Reactome" id="R-CEL-432720">
    <property type="pathway name" value="Lysosome Vesicle Biogenesis"/>
</dbReference>
<dbReference type="Reactome" id="R-CEL-432722">
    <property type="pathway name" value="Golgi Associated Vesicle Biogenesis"/>
</dbReference>
<dbReference type="Reactome" id="R-CEL-6807878">
    <property type="pathway name" value="COPI-mediated anterograde transport"/>
</dbReference>
<dbReference type="Reactome" id="R-CEL-6811434">
    <property type="pathway name" value="COPI-dependent Golgi-to-ER retrograde traffic"/>
</dbReference>
<dbReference type="UniPathway" id="UPA00143"/>
<dbReference type="PRO" id="PR:Q09654"/>
<dbReference type="Proteomes" id="UP000001940">
    <property type="component" value="Chromosome II"/>
</dbReference>
<dbReference type="Bgee" id="WBGene00000180">
    <property type="expression patterns" value="Expressed in pharyngeal muscle cell (C elegans) and 3 other cell types or tissues"/>
</dbReference>
<dbReference type="GO" id="GO:0005737">
    <property type="term" value="C:cytoplasm"/>
    <property type="evidence" value="ECO:0000318"/>
    <property type="project" value="GO_Central"/>
</dbReference>
<dbReference type="GO" id="GO:0005765">
    <property type="term" value="C:lysosomal membrane"/>
    <property type="evidence" value="ECO:0000318"/>
    <property type="project" value="GO_Central"/>
</dbReference>
<dbReference type="GO" id="GO:0005886">
    <property type="term" value="C:plasma membrane"/>
    <property type="evidence" value="ECO:0000318"/>
    <property type="project" value="GO_Central"/>
</dbReference>
<dbReference type="GO" id="GO:0005525">
    <property type="term" value="F:GTP binding"/>
    <property type="evidence" value="ECO:0000318"/>
    <property type="project" value="GO_Central"/>
</dbReference>
<dbReference type="GO" id="GO:0003924">
    <property type="term" value="F:GTPase activity"/>
    <property type="evidence" value="ECO:0007669"/>
    <property type="project" value="InterPro"/>
</dbReference>
<dbReference type="GO" id="GO:0016740">
    <property type="term" value="F:transferase activity"/>
    <property type="evidence" value="ECO:0007669"/>
    <property type="project" value="UniProtKB-KW"/>
</dbReference>
<dbReference type="GO" id="GO:0008270">
    <property type="term" value="F:zinc ion binding"/>
    <property type="evidence" value="ECO:0007669"/>
    <property type="project" value="UniProtKB-KW"/>
</dbReference>
<dbReference type="GO" id="GO:0006886">
    <property type="term" value="P:intracellular protein transport"/>
    <property type="evidence" value="ECO:0000318"/>
    <property type="project" value="GO_Central"/>
</dbReference>
<dbReference type="GO" id="GO:0016567">
    <property type="term" value="P:protein ubiquitination"/>
    <property type="evidence" value="ECO:0007669"/>
    <property type="project" value="UniProtKB-UniPathway"/>
</dbReference>
<dbReference type="GO" id="GO:0016192">
    <property type="term" value="P:vesicle-mediated transport"/>
    <property type="evidence" value="ECO:0000318"/>
    <property type="project" value="GO_Central"/>
</dbReference>
<dbReference type="CDD" id="cd00878">
    <property type="entry name" value="Arf_Arl"/>
    <property type="match status" value="1"/>
</dbReference>
<dbReference type="CDD" id="cd19773">
    <property type="entry name" value="Bbox2_TRIM23_C-IX_rpt1"/>
    <property type="match status" value="1"/>
</dbReference>
<dbReference type="CDD" id="cd19774">
    <property type="entry name" value="Bbox2_TRIM23_C-IX_rpt2"/>
    <property type="match status" value="1"/>
</dbReference>
<dbReference type="CDD" id="cd23124">
    <property type="entry name" value="mRING-HC-C3HC3D_arc-1-like"/>
    <property type="match status" value="1"/>
</dbReference>
<dbReference type="FunFam" id="3.40.50.300:FF:002374">
    <property type="entry name" value="E3 ubiquitin-protein ligase arc-1"/>
    <property type="match status" value="1"/>
</dbReference>
<dbReference type="FunFam" id="3.30.40.10:FF:000130">
    <property type="entry name" value="E3 ubiquitin-protein ligase TRIM23"/>
    <property type="match status" value="1"/>
</dbReference>
<dbReference type="Gene3D" id="4.10.830.40">
    <property type="match status" value="1"/>
</dbReference>
<dbReference type="Gene3D" id="3.30.160.60">
    <property type="entry name" value="Classic Zinc Finger"/>
    <property type="match status" value="1"/>
</dbReference>
<dbReference type="Gene3D" id="3.40.50.300">
    <property type="entry name" value="P-loop containing nucleotide triphosphate hydrolases"/>
    <property type="match status" value="1"/>
</dbReference>
<dbReference type="Gene3D" id="3.30.40.10">
    <property type="entry name" value="Zinc/RING finger domain, C3HC4 (zinc finger)"/>
    <property type="match status" value="1"/>
</dbReference>
<dbReference type="InterPro" id="IPR003649">
    <property type="entry name" value="Bbox_C"/>
</dbReference>
<dbReference type="InterPro" id="IPR052667">
    <property type="entry name" value="E3_ubiquitin-ligase_RING"/>
</dbReference>
<dbReference type="InterPro" id="IPR027417">
    <property type="entry name" value="P-loop_NTPase"/>
</dbReference>
<dbReference type="InterPro" id="IPR005225">
    <property type="entry name" value="Small_GTP-bd"/>
</dbReference>
<dbReference type="InterPro" id="IPR006689">
    <property type="entry name" value="Small_GTPase_ARF/SAR"/>
</dbReference>
<dbReference type="InterPro" id="IPR027370">
    <property type="entry name" value="Znf-RING_euk"/>
</dbReference>
<dbReference type="InterPro" id="IPR000315">
    <property type="entry name" value="Znf_B-box"/>
</dbReference>
<dbReference type="InterPro" id="IPR013087">
    <property type="entry name" value="Znf_C2H2_type"/>
</dbReference>
<dbReference type="InterPro" id="IPR001841">
    <property type="entry name" value="Znf_RING"/>
</dbReference>
<dbReference type="InterPro" id="IPR013083">
    <property type="entry name" value="Znf_RING/FYVE/PHD"/>
</dbReference>
<dbReference type="InterPro" id="IPR017907">
    <property type="entry name" value="Znf_RING_CS"/>
</dbReference>
<dbReference type="NCBIfam" id="TIGR00231">
    <property type="entry name" value="small_GTP"/>
    <property type="match status" value="1"/>
</dbReference>
<dbReference type="PANTHER" id="PTHR47156:SF10">
    <property type="entry name" value="E3 UBIQUITIN-PROTEIN LIGASE TRIM-21-RELATED"/>
    <property type="match status" value="1"/>
</dbReference>
<dbReference type="PANTHER" id="PTHR47156">
    <property type="entry name" value="PROTEIN CBG20824"/>
    <property type="match status" value="1"/>
</dbReference>
<dbReference type="Pfam" id="PF00025">
    <property type="entry name" value="Arf"/>
    <property type="match status" value="1"/>
</dbReference>
<dbReference type="Pfam" id="PF00643">
    <property type="entry name" value="zf-B_box"/>
    <property type="match status" value="1"/>
</dbReference>
<dbReference type="Pfam" id="PF13445">
    <property type="entry name" value="zf-RING_UBOX"/>
    <property type="match status" value="1"/>
</dbReference>
<dbReference type="PRINTS" id="PR00328">
    <property type="entry name" value="SAR1GTPBP"/>
</dbReference>
<dbReference type="SMART" id="SM00177">
    <property type="entry name" value="ARF"/>
    <property type="match status" value="1"/>
</dbReference>
<dbReference type="SMART" id="SM00502">
    <property type="entry name" value="BBC"/>
    <property type="match status" value="1"/>
</dbReference>
<dbReference type="SMART" id="SM00336">
    <property type="entry name" value="BBOX"/>
    <property type="match status" value="2"/>
</dbReference>
<dbReference type="SMART" id="SM00175">
    <property type="entry name" value="RAB"/>
    <property type="match status" value="1"/>
</dbReference>
<dbReference type="SMART" id="SM00184">
    <property type="entry name" value="RING"/>
    <property type="match status" value="1"/>
</dbReference>
<dbReference type="SMART" id="SM00178">
    <property type="entry name" value="SAR"/>
    <property type="match status" value="1"/>
</dbReference>
<dbReference type="SUPFAM" id="SSF57845">
    <property type="entry name" value="B-box zinc-binding domain"/>
    <property type="match status" value="1"/>
</dbReference>
<dbReference type="SUPFAM" id="SSF52540">
    <property type="entry name" value="P-loop containing nucleoside triphosphate hydrolases"/>
    <property type="match status" value="1"/>
</dbReference>
<dbReference type="SUPFAM" id="SSF57850">
    <property type="entry name" value="RING/U-box"/>
    <property type="match status" value="1"/>
</dbReference>
<dbReference type="PROSITE" id="PS51417">
    <property type="entry name" value="ARF"/>
    <property type="match status" value="1"/>
</dbReference>
<dbReference type="PROSITE" id="PS50119">
    <property type="entry name" value="ZF_BBOX"/>
    <property type="match status" value="1"/>
</dbReference>
<dbReference type="PROSITE" id="PS00518">
    <property type="entry name" value="ZF_RING_1"/>
    <property type="match status" value="1"/>
</dbReference>
<dbReference type="PROSITE" id="PS50089">
    <property type="entry name" value="ZF_RING_2"/>
    <property type="match status" value="1"/>
</dbReference>
<sequence>MNEYGCNVCNEEYSARDPLKCPRVLTGCGHTICHNCAISIAGRNSSIFCPFDRTATQIPGGDLQNLKKNFALLELLEKIADGGGLLEKSGEVVKFDRYSKERLLNLECDEDSEHVAVIYCTVCDSNLCERCSESTHSTNVLSKHRRIPLTEKPPPLVHCRLHSSYVVEFVCKELSCDTESPLMCMMCRDYGRHKGHSHVLIEKEVEDLREKVREHLGELSKQSETIGNALHSIDSVIHELTPGQEDGSLEETRQEVRNHFRRLRTALDRDEEDAVETVDRYARNRVESLQTQKERLEAISSKIGNTCTTLQKALIMERGKILDRKDDLLALAESTAAEPTAVLDQSQLSTRIAFSFLNDRKLHIGDFIESRVVLLGLDGAGKTSIVRRLKKVQMDTVMAPHPTIGFNIETIHYKNYRLNFWDVGGLPKLRHLWKHYYSNAQAIFYVIDGYAVERFSEAIKELNRVMSDPLVGTCPVIVAVNRKDGYALNGHMDALLSQLEALPFQHHFHCCDAATGSGIDQIIDQITVCLSRLNGTCPV</sequence>
<keyword id="KW-0342">GTP-binding</keyword>
<keyword id="KW-0479">Metal-binding</keyword>
<keyword id="KW-0547">Nucleotide-binding</keyword>
<keyword id="KW-1185">Reference proteome</keyword>
<keyword id="KW-0808">Transferase</keyword>
<keyword id="KW-0833">Ubl conjugation pathway</keyword>
<keyword id="KW-0862">Zinc</keyword>
<keyword id="KW-0863">Zinc-finger</keyword>